<comment type="function">
    <text evidence="1">Poorly processive, error-prone DNA polymerase involved in untargeted mutagenesis. Copies undamaged DNA at stalled replication forks, which arise in vivo from mismatched or misaligned primer ends. These misaligned primers can be extended by PolIV. Exhibits no 3'-5' exonuclease (proofreading) activity. May be involved in translesional synthesis, in conjunction with the beta clamp from PolIII.</text>
</comment>
<comment type="catalytic activity">
    <reaction evidence="1">
        <text>DNA(n) + a 2'-deoxyribonucleoside 5'-triphosphate = DNA(n+1) + diphosphate</text>
        <dbReference type="Rhea" id="RHEA:22508"/>
        <dbReference type="Rhea" id="RHEA-COMP:17339"/>
        <dbReference type="Rhea" id="RHEA-COMP:17340"/>
        <dbReference type="ChEBI" id="CHEBI:33019"/>
        <dbReference type="ChEBI" id="CHEBI:61560"/>
        <dbReference type="ChEBI" id="CHEBI:173112"/>
        <dbReference type="EC" id="2.7.7.7"/>
    </reaction>
</comment>
<comment type="cofactor">
    <cofactor evidence="1">
        <name>Mg(2+)</name>
        <dbReference type="ChEBI" id="CHEBI:18420"/>
    </cofactor>
    <text evidence="1">Binds 2 magnesium ions per subunit.</text>
</comment>
<comment type="subunit">
    <text evidence="1">Monomer.</text>
</comment>
<comment type="subcellular location">
    <subcellularLocation>
        <location evidence="1">Cytoplasm</location>
    </subcellularLocation>
</comment>
<comment type="similarity">
    <text evidence="1">Belongs to the DNA polymerase type-Y family.</text>
</comment>
<protein>
    <recommendedName>
        <fullName evidence="1">DNA polymerase IV</fullName>
        <shortName evidence="1">Pol IV</shortName>
        <ecNumber evidence="1">2.7.7.7</ecNumber>
    </recommendedName>
</protein>
<feature type="chain" id="PRO_1000137130" description="DNA polymerase IV">
    <location>
        <begin position="1"/>
        <end position="350"/>
    </location>
</feature>
<feature type="domain" description="UmuC" evidence="1">
    <location>
        <begin position="7"/>
        <end position="188"/>
    </location>
</feature>
<feature type="active site" evidence="1">
    <location>
        <position position="107"/>
    </location>
</feature>
<feature type="binding site" evidence="1">
    <location>
        <position position="11"/>
    </location>
    <ligand>
        <name>Mg(2+)</name>
        <dbReference type="ChEBI" id="CHEBI:18420"/>
    </ligand>
</feature>
<feature type="binding site" evidence="1">
    <location>
        <position position="106"/>
    </location>
    <ligand>
        <name>Mg(2+)</name>
        <dbReference type="ChEBI" id="CHEBI:18420"/>
    </ligand>
</feature>
<feature type="site" description="Substrate discrimination" evidence="1">
    <location>
        <position position="16"/>
    </location>
</feature>
<sequence>MSKTRKIIHIDMDYFFAQVEEKANPSLKDKPFAVGGTNPKRGVISTCNYIAREYGVRSAMPTAIAMQKCPNLILLNTDFAKYKATSAVIRDIFYSFTDKVEPLSLDEAYLDVTDVKEYKNSATLIAQAIKQEIFNKTGLTGSAGVAPNKLLAKIASDINKPNGLYVITPEQVDSFVKDLPVKKLFGVGKVSQEKLKNMNVETCLDLQQLSLATLVDKFGKFGSSLYNYARGIDNREVNPVRIRKSVSVENTYLEDLKTLEACLEKLPNLYNKLTSRMTEEHYKSIIGIVVKFTDTKFNKTSLTRVAKTLDKKVLKNLIIELHQKQNYHIRLIGIGIKLGEIDDRQLSLVF</sequence>
<evidence type="ECO:0000255" key="1">
    <source>
        <dbReference type="HAMAP-Rule" id="MF_01113"/>
    </source>
</evidence>
<dbReference type="EC" id="2.7.7.7" evidence="1"/>
<dbReference type="EMBL" id="CP000937">
    <property type="protein sequence ID" value="ABZ87837.1"/>
    <property type="molecule type" value="Genomic_DNA"/>
</dbReference>
<dbReference type="SMR" id="B0TZS5"/>
<dbReference type="KEGG" id="fph:Fphi_1613"/>
<dbReference type="eggNOG" id="COG0389">
    <property type="taxonomic scope" value="Bacteria"/>
</dbReference>
<dbReference type="HOGENOM" id="CLU_012348_1_2_6"/>
<dbReference type="GO" id="GO:0005829">
    <property type="term" value="C:cytosol"/>
    <property type="evidence" value="ECO:0007669"/>
    <property type="project" value="TreeGrafter"/>
</dbReference>
<dbReference type="GO" id="GO:0003684">
    <property type="term" value="F:damaged DNA binding"/>
    <property type="evidence" value="ECO:0007669"/>
    <property type="project" value="InterPro"/>
</dbReference>
<dbReference type="GO" id="GO:0003887">
    <property type="term" value="F:DNA-directed DNA polymerase activity"/>
    <property type="evidence" value="ECO:0007669"/>
    <property type="project" value="UniProtKB-UniRule"/>
</dbReference>
<dbReference type="GO" id="GO:0000287">
    <property type="term" value="F:magnesium ion binding"/>
    <property type="evidence" value="ECO:0007669"/>
    <property type="project" value="UniProtKB-UniRule"/>
</dbReference>
<dbReference type="GO" id="GO:0006261">
    <property type="term" value="P:DNA-templated DNA replication"/>
    <property type="evidence" value="ECO:0007669"/>
    <property type="project" value="UniProtKB-UniRule"/>
</dbReference>
<dbReference type="GO" id="GO:0042276">
    <property type="term" value="P:error-prone translesion synthesis"/>
    <property type="evidence" value="ECO:0007669"/>
    <property type="project" value="TreeGrafter"/>
</dbReference>
<dbReference type="GO" id="GO:0009432">
    <property type="term" value="P:SOS response"/>
    <property type="evidence" value="ECO:0007669"/>
    <property type="project" value="TreeGrafter"/>
</dbReference>
<dbReference type="CDD" id="cd03586">
    <property type="entry name" value="PolY_Pol_IV_kappa"/>
    <property type="match status" value="1"/>
</dbReference>
<dbReference type="FunFam" id="1.10.150.20:FF:000019">
    <property type="entry name" value="DNA polymerase IV"/>
    <property type="match status" value="1"/>
</dbReference>
<dbReference type="FunFam" id="3.40.1170.60:FF:000001">
    <property type="entry name" value="DNA polymerase IV"/>
    <property type="match status" value="1"/>
</dbReference>
<dbReference type="Gene3D" id="3.30.70.270">
    <property type="match status" value="1"/>
</dbReference>
<dbReference type="Gene3D" id="3.40.1170.60">
    <property type="match status" value="1"/>
</dbReference>
<dbReference type="Gene3D" id="1.10.150.20">
    <property type="entry name" value="5' to 3' exonuclease, C-terminal subdomain"/>
    <property type="match status" value="1"/>
</dbReference>
<dbReference type="Gene3D" id="3.30.1490.100">
    <property type="entry name" value="DNA polymerase, Y-family, little finger domain"/>
    <property type="match status" value="1"/>
</dbReference>
<dbReference type="HAMAP" id="MF_01113">
    <property type="entry name" value="DNApol_IV"/>
    <property type="match status" value="1"/>
</dbReference>
<dbReference type="InterPro" id="IPR043502">
    <property type="entry name" value="DNA/RNA_pol_sf"/>
</dbReference>
<dbReference type="InterPro" id="IPR036775">
    <property type="entry name" value="DNA_pol_Y-fam_lit_finger_sf"/>
</dbReference>
<dbReference type="InterPro" id="IPR017961">
    <property type="entry name" value="DNA_pol_Y-fam_little_finger"/>
</dbReference>
<dbReference type="InterPro" id="IPR050116">
    <property type="entry name" value="DNA_polymerase-Y"/>
</dbReference>
<dbReference type="InterPro" id="IPR022880">
    <property type="entry name" value="DNApol_IV"/>
</dbReference>
<dbReference type="InterPro" id="IPR053848">
    <property type="entry name" value="IMS_HHH_1"/>
</dbReference>
<dbReference type="InterPro" id="IPR043128">
    <property type="entry name" value="Rev_trsase/Diguanyl_cyclase"/>
</dbReference>
<dbReference type="InterPro" id="IPR001126">
    <property type="entry name" value="UmuC"/>
</dbReference>
<dbReference type="NCBIfam" id="NF002677">
    <property type="entry name" value="PRK02406.1"/>
    <property type="match status" value="1"/>
</dbReference>
<dbReference type="PANTHER" id="PTHR11076:SF33">
    <property type="entry name" value="DNA POLYMERASE KAPPA"/>
    <property type="match status" value="1"/>
</dbReference>
<dbReference type="PANTHER" id="PTHR11076">
    <property type="entry name" value="DNA REPAIR POLYMERASE UMUC / TRANSFERASE FAMILY MEMBER"/>
    <property type="match status" value="1"/>
</dbReference>
<dbReference type="Pfam" id="PF00817">
    <property type="entry name" value="IMS"/>
    <property type="match status" value="1"/>
</dbReference>
<dbReference type="Pfam" id="PF11799">
    <property type="entry name" value="IMS_C"/>
    <property type="match status" value="1"/>
</dbReference>
<dbReference type="Pfam" id="PF21999">
    <property type="entry name" value="IMS_HHH_1"/>
    <property type="match status" value="1"/>
</dbReference>
<dbReference type="SUPFAM" id="SSF56672">
    <property type="entry name" value="DNA/RNA polymerases"/>
    <property type="match status" value="1"/>
</dbReference>
<dbReference type="SUPFAM" id="SSF100879">
    <property type="entry name" value="Lesion bypass DNA polymerase (Y-family), little finger domain"/>
    <property type="match status" value="1"/>
</dbReference>
<dbReference type="PROSITE" id="PS50173">
    <property type="entry name" value="UMUC"/>
    <property type="match status" value="1"/>
</dbReference>
<keyword id="KW-0963">Cytoplasm</keyword>
<keyword id="KW-0227">DNA damage</keyword>
<keyword id="KW-0234">DNA repair</keyword>
<keyword id="KW-0235">DNA replication</keyword>
<keyword id="KW-0238">DNA-binding</keyword>
<keyword id="KW-0239">DNA-directed DNA polymerase</keyword>
<keyword id="KW-0460">Magnesium</keyword>
<keyword id="KW-0479">Metal-binding</keyword>
<keyword id="KW-0515">Mutator protein</keyword>
<keyword id="KW-0548">Nucleotidyltransferase</keyword>
<keyword id="KW-0808">Transferase</keyword>
<proteinExistence type="inferred from homology"/>
<accession>B0TZS5</accession>
<reference key="1">
    <citation type="submission" date="2007-12" db="EMBL/GenBank/DDBJ databases">
        <title>Complete sequence of chromosome of Francisella philomiragia subsp. philomiragia ATCC 25017.</title>
        <authorList>
            <consortium name="US DOE Joint Genome Institute"/>
            <person name="Copeland A."/>
            <person name="Lucas S."/>
            <person name="Lapidus A."/>
            <person name="Barry K."/>
            <person name="Detter J.C."/>
            <person name="Glavina del Rio T."/>
            <person name="Hammon N."/>
            <person name="Israni S."/>
            <person name="Dalin E."/>
            <person name="Tice H."/>
            <person name="Pitluck S."/>
            <person name="Chain P."/>
            <person name="Malfatti S."/>
            <person name="Shin M."/>
            <person name="Vergez L."/>
            <person name="Schmutz J."/>
            <person name="Larimer F."/>
            <person name="Land M."/>
            <person name="Hauser L."/>
            <person name="Richardson P."/>
        </authorList>
    </citation>
    <scope>NUCLEOTIDE SEQUENCE [LARGE SCALE GENOMIC DNA]</scope>
    <source>
        <strain>ATCC 25017 / CCUG 19701 / FSC 153 / O#319-036</strain>
    </source>
</reference>
<gene>
    <name evidence="1" type="primary">dinB</name>
    <name type="ordered locus">Fphi_1613</name>
</gene>
<organism>
    <name type="scientific">Francisella philomiragia subsp. philomiragia (strain ATCC 25017 / CCUG 19701 / FSC 153 / O#319-036)</name>
    <dbReference type="NCBI Taxonomy" id="484022"/>
    <lineage>
        <taxon>Bacteria</taxon>
        <taxon>Pseudomonadati</taxon>
        <taxon>Pseudomonadota</taxon>
        <taxon>Gammaproteobacteria</taxon>
        <taxon>Thiotrichales</taxon>
        <taxon>Francisellaceae</taxon>
        <taxon>Francisella</taxon>
    </lineage>
</organism>
<name>DPO4_FRAP2</name>